<sequence>MAENFRIIDGGVTAPKGFIANGHKDRKYGVTIIASEVDAVCAGVFTTNKVFAHPVSLSKETLKNSDTFRAIIANSGNANCFTKGGMDDARAFVKKASSLLNIPESQILSASTGVIGRKMAMDILNREVEKAYESLKLESNNENAAKAIMTTDAFKKTVAVEFNVGEKVVKIGGIAKGAGMIAPNMLHATMLGFITTDIEISKEELKNSLQNAADESFNNAVVDGDMSTNDTVFVLANGKSNVNYRECIEEFDKALLYISTELAKMIVSDGEGAKKLIEAVLKGAATKEDAKKASMSIVRSLLLKTAIHGADPNWGRIAAAVGYSGAEMDMNNFDIIISSITSGKETYLVKCGEQLADEGTAELKMAQEIMKDSKIRITVDLKKGEFKNTSFGCDLGYEYVRINSEYTT</sequence>
<gene>
    <name evidence="1" type="primary">argJ</name>
    <name type="ordered locus">Mevan_0023</name>
</gene>
<dbReference type="EC" id="2.3.1.35" evidence="1"/>
<dbReference type="EMBL" id="CP000742">
    <property type="protein sequence ID" value="ABR53938.1"/>
    <property type="molecule type" value="Genomic_DNA"/>
</dbReference>
<dbReference type="RefSeq" id="WP_011971842.1">
    <property type="nucleotide sequence ID" value="NC_009634.1"/>
</dbReference>
<dbReference type="SMR" id="A6UN66"/>
<dbReference type="STRING" id="406327.Mevan_0023"/>
<dbReference type="MEROPS" id="T05.002"/>
<dbReference type="GeneID" id="5325785"/>
<dbReference type="KEGG" id="mvn:Mevan_0023"/>
<dbReference type="eggNOG" id="arCOG04413">
    <property type="taxonomic scope" value="Archaea"/>
</dbReference>
<dbReference type="HOGENOM" id="CLU_027172_1_0_2"/>
<dbReference type="OrthoDB" id="52592at2157"/>
<dbReference type="UniPathway" id="UPA00068">
    <property type="reaction ID" value="UER00111"/>
</dbReference>
<dbReference type="Proteomes" id="UP000001107">
    <property type="component" value="Chromosome"/>
</dbReference>
<dbReference type="GO" id="GO:0005737">
    <property type="term" value="C:cytoplasm"/>
    <property type="evidence" value="ECO:0007669"/>
    <property type="project" value="UniProtKB-SubCell"/>
</dbReference>
<dbReference type="GO" id="GO:0004358">
    <property type="term" value="F:glutamate N-acetyltransferase activity"/>
    <property type="evidence" value="ECO:0007669"/>
    <property type="project" value="UniProtKB-UniRule"/>
</dbReference>
<dbReference type="GO" id="GO:0004042">
    <property type="term" value="F:L-glutamate N-acetyltransferase activity"/>
    <property type="evidence" value="ECO:0007669"/>
    <property type="project" value="UniProtKB-UniRule"/>
</dbReference>
<dbReference type="GO" id="GO:0006526">
    <property type="term" value="P:L-arginine biosynthetic process"/>
    <property type="evidence" value="ECO:0007669"/>
    <property type="project" value="UniProtKB-UniRule"/>
</dbReference>
<dbReference type="GO" id="GO:0006592">
    <property type="term" value="P:ornithine biosynthetic process"/>
    <property type="evidence" value="ECO:0007669"/>
    <property type="project" value="TreeGrafter"/>
</dbReference>
<dbReference type="CDD" id="cd02152">
    <property type="entry name" value="OAT"/>
    <property type="match status" value="1"/>
</dbReference>
<dbReference type="Gene3D" id="3.30.2330.10">
    <property type="entry name" value="arginine biosynthesis bifunctional protein suprefamily"/>
    <property type="match status" value="1"/>
</dbReference>
<dbReference type="Gene3D" id="3.10.20.340">
    <property type="entry name" value="ArgJ beta chain, C-terminal domain"/>
    <property type="match status" value="1"/>
</dbReference>
<dbReference type="Gene3D" id="3.60.70.12">
    <property type="entry name" value="L-amino peptidase D-ALA esterase/amidase"/>
    <property type="match status" value="1"/>
</dbReference>
<dbReference type="HAMAP" id="MF_01106">
    <property type="entry name" value="ArgJ"/>
    <property type="match status" value="1"/>
</dbReference>
<dbReference type="InterPro" id="IPR002813">
    <property type="entry name" value="Arg_biosynth_ArgJ"/>
</dbReference>
<dbReference type="InterPro" id="IPR016117">
    <property type="entry name" value="ArgJ-like_dom_sf"/>
</dbReference>
<dbReference type="InterPro" id="IPR042195">
    <property type="entry name" value="ArgJ_beta_C"/>
</dbReference>
<dbReference type="NCBIfam" id="TIGR00120">
    <property type="entry name" value="ArgJ"/>
    <property type="match status" value="1"/>
</dbReference>
<dbReference type="NCBIfam" id="NF003802">
    <property type="entry name" value="PRK05388.1"/>
    <property type="match status" value="1"/>
</dbReference>
<dbReference type="PANTHER" id="PTHR23100">
    <property type="entry name" value="ARGININE BIOSYNTHESIS BIFUNCTIONAL PROTEIN ARGJ"/>
    <property type="match status" value="1"/>
</dbReference>
<dbReference type="PANTHER" id="PTHR23100:SF0">
    <property type="entry name" value="ARGININE BIOSYNTHESIS BIFUNCTIONAL PROTEIN ARGJ, MITOCHONDRIAL"/>
    <property type="match status" value="1"/>
</dbReference>
<dbReference type="Pfam" id="PF01960">
    <property type="entry name" value="ArgJ"/>
    <property type="match status" value="1"/>
</dbReference>
<dbReference type="SUPFAM" id="SSF56266">
    <property type="entry name" value="DmpA/ArgJ-like"/>
    <property type="match status" value="1"/>
</dbReference>
<reference key="1">
    <citation type="submission" date="2007-06" db="EMBL/GenBank/DDBJ databases">
        <title>Complete sequence of Methanococcus vannielii SB.</title>
        <authorList>
            <consortium name="US DOE Joint Genome Institute"/>
            <person name="Copeland A."/>
            <person name="Lucas S."/>
            <person name="Lapidus A."/>
            <person name="Barry K."/>
            <person name="Glavina del Rio T."/>
            <person name="Dalin E."/>
            <person name="Tice H."/>
            <person name="Pitluck S."/>
            <person name="Chain P."/>
            <person name="Malfatti S."/>
            <person name="Shin M."/>
            <person name="Vergez L."/>
            <person name="Schmutz J."/>
            <person name="Larimer F."/>
            <person name="Land M."/>
            <person name="Hauser L."/>
            <person name="Kyrpides N."/>
            <person name="Anderson I."/>
            <person name="Sieprawska-Lupa M."/>
            <person name="Whitman W.B."/>
            <person name="Richardson P."/>
        </authorList>
    </citation>
    <scope>NUCLEOTIDE SEQUENCE [LARGE SCALE GENOMIC DNA]</scope>
    <source>
        <strain>ATCC 35089 / DSM 1224 / JCM 13029 / OCM 148 / SB</strain>
    </source>
</reference>
<accession>A6UN66</accession>
<name>ARGJ_METVS</name>
<feature type="chain" id="PRO_1000065052" description="Glutamate N-acetyltransferase alpha chain" evidence="1">
    <location>
        <begin position="1"/>
        <end position="188"/>
    </location>
</feature>
<feature type="chain" id="PRO_1000065053" description="Glutamate N-acetyltransferase beta chain" evidence="1">
    <location>
        <begin position="189"/>
        <end position="408"/>
    </location>
</feature>
<feature type="active site" description="Nucleophile" evidence="1">
    <location>
        <position position="189"/>
    </location>
</feature>
<feature type="binding site" evidence="1">
    <location>
        <position position="150"/>
    </location>
    <ligand>
        <name>substrate</name>
    </ligand>
</feature>
<feature type="binding site" evidence="1">
    <location>
        <position position="176"/>
    </location>
    <ligand>
        <name>substrate</name>
    </ligand>
</feature>
<feature type="binding site" evidence="1">
    <location>
        <position position="189"/>
    </location>
    <ligand>
        <name>substrate</name>
    </ligand>
</feature>
<feature type="binding site" evidence="1">
    <location>
        <position position="271"/>
    </location>
    <ligand>
        <name>substrate</name>
    </ligand>
</feature>
<feature type="binding site" evidence="1">
    <location>
        <position position="403"/>
    </location>
    <ligand>
        <name>substrate</name>
    </ligand>
</feature>
<feature type="binding site" evidence="1">
    <location>
        <position position="408"/>
    </location>
    <ligand>
        <name>substrate</name>
    </ligand>
</feature>
<feature type="site" description="Involved in the stabilization of negative charge on the oxyanion by the formation of the oxyanion hole" evidence="1">
    <location>
        <position position="112"/>
    </location>
</feature>
<feature type="site" description="Involved in the stabilization of negative charge on the oxyanion by the formation of the oxyanion hole" evidence="1">
    <location>
        <position position="113"/>
    </location>
</feature>
<feature type="site" description="Cleavage; by autolysis" evidence="1">
    <location>
        <begin position="188"/>
        <end position="189"/>
    </location>
</feature>
<comment type="function">
    <text evidence="1">Catalyzes the transfer of the acetyl group from N(2)-acetylornithine to glutamate, forming N-acetylglutamate and L-ornithine.</text>
</comment>
<comment type="catalytic activity">
    <reaction evidence="1">
        <text>N(2)-acetyl-L-ornithine + L-glutamate = N-acetyl-L-glutamate + L-ornithine</text>
        <dbReference type="Rhea" id="RHEA:15349"/>
        <dbReference type="ChEBI" id="CHEBI:29985"/>
        <dbReference type="ChEBI" id="CHEBI:44337"/>
        <dbReference type="ChEBI" id="CHEBI:46911"/>
        <dbReference type="ChEBI" id="CHEBI:57805"/>
        <dbReference type="EC" id="2.3.1.35"/>
    </reaction>
</comment>
<comment type="pathway">
    <text evidence="1">Amino-acid biosynthesis; L-arginine biosynthesis; L-ornithine and N-acetyl-L-glutamate from L-glutamate and N(2)-acetyl-L-ornithine (cyclic): step 1/1.</text>
</comment>
<comment type="subunit">
    <text evidence="1">Heterotetramer of two alpha and two beta chains.</text>
</comment>
<comment type="subcellular location">
    <subcellularLocation>
        <location evidence="1">Cytoplasm</location>
    </subcellularLocation>
</comment>
<comment type="similarity">
    <text evidence="1">Belongs to the ArgJ family.</text>
</comment>
<proteinExistence type="inferred from homology"/>
<protein>
    <recommendedName>
        <fullName evidence="1">Glutamate N-acetyltransferase</fullName>
        <ecNumber evidence="1">2.3.1.35</ecNumber>
    </recommendedName>
    <alternativeName>
        <fullName evidence="1">Ornithine acetyltransferase</fullName>
        <shortName evidence="1">OATase</shortName>
    </alternativeName>
    <alternativeName>
        <fullName evidence="1">Ornithine transacetylase</fullName>
    </alternativeName>
    <component>
        <recommendedName>
            <fullName evidence="1">Glutamate N-acetyltransferase alpha chain</fullName>
        </recommendedName>
    </component>
    <component>
        <recommendedName>
            <fullName evidence="1">Glutamate N-acetyltransferase beta chain</fullName>
        </recommendedName>
    </component>
</protein>
<organism>
    <name type="scientific">Methanococcus vannielii (strain ATCC 35089 / DSM 1224 / JCM 13029 / OCM 148 / SB)</name>
    <dbReference type="NCBI Taxonomy" id="406327"/>
    <lineage>
        <taxon>Archaea</taxon>
        <taxon>Methanobacteriati</taxon>
        <taxon>Methanobacteriota</taxon>
        <taxon>Methanomada group</taxon>
        <taxon>Methanococci</taxon>
        <taxon>Methanococcales</taxon>
        <taxon>Methanococcaceae</taxon>
        <taxon>Methanococcus</taxon>
    </lineage>
</organism>
<keyword id="KW-0012">Acyltransferase</keyword>
<keyword id="KW-0028">Amino-acid biosynthesis</keyword>
<keyword id="KW-0055">Arginine biosynthesis</keyword>
<keyword id="KW-0068">Autocatalytic cleavage</keyword>
<keyword id="KW-0963">Cytoplasm</keyword>
<keyword id="KW-0808">Transferase</keyword>
<evidence type="ECO:0000255" key="1">
    <source>
        <dbReference type="HAMAP-Rule" id="MF_01106"/>
    </source>
</evidence>